<name>RECR_STRMU</name>
<evidence type="ECO:0000255" key="1">
    <source>
        <dbReference type="HAMAP-Rule" id="MF_00017"/>
    </source>
</evidence>
<feature type="chain" id="PRO_0000190397" description="Recombination protein RecR">
    <location>
        <begin position="1"/>
        <end position="199"/>
    </location>
</feature>
<feature type="domain" description="Toprim" evidence="1">
    <location>
        <begin position="80"/>
        <end position="176"/>
    </location>
</feature>
<feature type="zinc finger region" description="C4-type" evidence="1">
    <location>
        <begin position="57"/>
        <end position="72"/>
    </location>
</feature>
<dbReference type="EMBL" id="AE014133">
    <property type="protein sequence ID" value="AAN58337.1"/>
    <property type="molecule type" value="Genomic_DNA"/>
</dbReference>
<dbReference type="RefSeq" id="NP_721031.1">
    <property type="nucleotide sequence ID" value="NC_004350.2"/>
</dbReference>
<dbReference type="RefSeq" id="WP_002263250.1">
    <property type="nucleotide sequence ID" value="NC_004350.2"/>
</dbReference>
<dbReference type="SMR" id="Q8DV99"/>
<dbReference type="STRING" id="210007.SMU_598"/>
<dbReference type="KEGG" id="smu:SMU_598"/>
<dbReference type="PATRIC" id="fig|210007.7.peg.531"/>
<dbReference type="eggNOG" id="COG0353">
    <property type="taxonomic scope" value="Bacteria"/>
</dbReference>
<dbReference type="HOGENOM" id="CLU_060739_1_0_9"/>
<dbReference type="OrthoDB" id="9802672at2"/>
<dbReference type="PhylomeDB" id="Q8DV99"/>
<dbReference type="Proteomes" id="UP000002512">
    <property type="component" value="Chromosome"/>
</dbReference>
<dbReference type="GO" id="GO:0003677">
    <property type="term" value="F:DNA binding"/>
    <property type="evidence" value="ECO:0007669"/>
    <property type="project" value="UniProtKB-UniRule"/>
</dbReference>
<dbReference type="GO" id="GO:0008270">
    <property type="term" value="F:zinc ion binding"/>
    <property type="evidence" value="ECO:0007669"/>
    <property type="project" value="UniProtKB-KW"/>
</dbReference>
<dbReference type="GO" id="GO:0006310">
    <property type="term" value="P:DNA recombination"/>
    <property type="evidence" value="ECO:0007669"/>
    <property type="project" value="UniProtKB-UniRule"/>
</dbReference>
<dbReference type="GO" id="GO:0006281">
    <property type="term" value="P:DNA repair"/>
    <property type="evidence" value="ECO:0007669"/>
    <property type="project" value="UniProtKB-UniRule"/>
</dbReference>
<dbReference type="CDD" id="cd01025">
    <property type="entry name" value="TOPRIM_recR"/>
    <property type="match status" value="1"/>
</dbReference>
<dbReference type="Gene3D" id="3.30.60.80">
    <property type="match status" value="1"/>
</dbReference>
<dbReference type="Gene3D" id="3.40.1360.10">
    <property type="match status" value="1"/>
</dbReference>
<dbReference type="Gene3D" id="6.10.250.240">
    <property type="match status" value="1"/>
</dbReference>
<dbReference type="Gene3D" id="1.10.8.420">
    <property type="entry name" value="RecR Domain 1"/>
    <property type="match status" value="1"/>
</dbReference>
<dbReference type="HAMAP" id="MF_00017">
    <property type="entry name" value="RecR"/>
    <property type="match status" value="1"/>
</dbReference>
<dbReference type="InterPro" id="IPR000093">
    <property type="entry name" value="DNA_Rcmb_RecR"/>
</dbReference>
<dbReference type="InterPro" id="IPR023627">
    <property type="entry name" value="Rcmb_RecR"/>
</dbReference>
<dbReference type="InterPro" id="IPR015967">
    <property type="entry name" value="Rcmb_RecR_Znf"/>
</dbReference>
<dbReference type="InterPro" id="IPR006171">
    <property type="entry name" value="TOPRIM_dom"/>
</dbReference>
<dbReference type="InterPro" id="IPR034137">
    <property type="entry name" value="TOPRIM_RecR"/>
</dbReference>
<dbReference type="NCBIfam" id="TIGR00615">
    <property type="entry name" value="recR"/>
    <property type="match status" value="1"/>
</dbReference>
<dbReference type="PANTHER" id="PTHR30446">
    <property type="entry name" value="RECOMBINATION PROTEIN RECR"/>
    <property type="match status" value="1"/>
</dbReference>
<dbReference type="PANTHER" id="PTHR30446:SF0">
    <property type="entry name" value="RECOMBINATION PROTEIN RECR"/>
    <property type="match status" value="1"/>
</dbReference>
<dbReference type="Pfam" id="PF21175">
    <property type="entry name" value="RecR_C"/>
    <property type="match status" value="1"/>
</dbReference>
<dbReference type="Pfam" id="PF21176">
    <property type="entry name" value="RecR_HhH"/>
    <property type="match status" value="1"/>
</dbReference>
<dbReference type="Pfam" id="PF02132">
    <property type="entry name" value="RecR_ZnF"/>
    <property type="match status" value="1"/>
</dbReference>
<dbReference type="Pfam" id="PF13662">
    <property type="entry name" value="Toprim_4"/>
    <property type="match status" value="1"/>
</dbReference>
<dbReference type="SMART" id="SM00493">
    <property type="entry name" value="TOPRIM"/>
    <property type="match status" value="1"/>
</dbReference>
<dbReference type="SUPFAM" id="SSF111304">
    <property type="entry name" value="Recombination protein RecR"/>
    <property type="match status" value="1"/>
</dbReference>
<dbReference type="PROSITE" id="PS01300">
    <property type="entry name" value="RECR"/>
    <property type="match status" value="1"/>
</dbReference>
<dbReference type="PROSITE" id="PS50880">
    <property type="entry name" value="TOPRIM"/>
    <property type="match status" value="1"/>
</dbReference>
<comment type="function">
    <text evidence="1">May play a role in DNA repair. It seems to be involved in an RecBC-independent recombinational process of DNA repair. It may act with RecF and RecO.</text>
</comment>
<comment type="similarity">
    <text evidence="1">Belongs to the RecR family.</text>
</comment>
<organism>
    <name type="scientific">Streptococcus mutans serotype c (strain ATCC 700610 / UA159)</name>
    <dbReference type="NCBI Taxonomy" id="210007"/>
    <lineage>
        <taxon>Bacteria</taxon>
        <taxon>Bacillati</taxon>
        <taxon>Bacillota</taxon>
        <taxon>Bacilli</taxon>
        <taxon>Lactobacillales</taxon>
        <taxon>Streptococcaceae</taxon>
        <taxon>Streptococcus</taxon>
    </lineage>
</organism>
<protein>
    <recommendedName>
        <fullName evidence="1">Recombination protein RecR</fullName>
    </recommendedName>
</protein>
<reference key="1">
    <citation type="journal article" date="2002" name="Proc. Natl. Acad. Sci. U.S.A.">
        <title>Genome sequence of Streptococcus mutans UA159, a cariogenic dental pathogen.</title>
        <authorList>
            <person name="Ajdic D.J."/>
            <person name="McShan W.M."/>
            <person name="McLaughlin R.E."/>
            <person name="Savic G."/>
            <person name="Chang J."/>
            <person name="Carson M.B."/>
            <person name="Primeaux C."/>
            <person name="Tian R."/>
            <person name="Kenton S."/>
            <person name="Jia H.G."/>
            <person name="Lin S.P."/>
            <person name="Qian Y."/>
            <person name="Li S."/>
            <person name="Zhu H."/>
            <person name="Najar F.Z."/>
            <person name="Lai H."/>
            <person name="White J."/>
            <person name="Roe B.A."/>
            <person name="Ferretti J.J."/>
        </authorList>
    </citation>
    <scope>NUCLEOTIDE SEQUENCE [LARGE SCALE GENOMIC DNA]</scope>
    <source>
        <strain>ATCC 700610 / UA159</strain>
    </source>
</reference>
<sequence length="199" mass="21819">MLYPTPIAKLIESFTKLPGIGIKTATRLAFYTIGMSDEDVNNFAKNLLAAKRELTYCSVCGNLTDDDPCNICTDESRDRSTVLVVEDSKDVSAMEKIQEYHGLYHVLHGLISPMNGIGPDDINLKSLLTRLRDNSDIHEVIIATNATADGEATAMYISRVLKPAGITVTRLARGLAVGSDIEYADEVTLLRAIENRTEL</sequence>
<proteinExistence type="inferred from homology"/>
<keyword id="KW-0227">DNA damage</keyword>
<keyword id="KW-0233">DNA recombination</keyword>
<keyword id="KW-0234">DNA repair</keyword>
<keyword id="KW-0479">Metal-binding</keyword>
<keyword id="KW-1185">Reference proteome</keyword>
<keyword id="KW-0862">Zinc</keyword>
<keyword id="KW-0863">Zinc-finger</keyword>
<accession>Q8DV99</accession>
<gene>
    <name evidence="1" type="primary">recR</name>
    <name type="ordered locus">SMU_598</name>
</gene>